<protein>
    <recommendedName>
        <fullName>Histone H2B.2</fullName>
    </recommendedName>
</protein>
<name>H2B2_YEAST</name>
<proteinExistence type="evidence at protein level"/>
<gene>
    <name type="primary">HTB2</name>
    <name type="synonym">H2B2</name>
    <name type="ordered locus">YBL002W</name>
    <name type="ORF">YBL0104</name>
</gene>
<evidence type="ECO:0000256" key="1">
    <source>
        <dbReference type="SAM" id="MobiDB-lite"/>
    </source>
</evidence>
<evidence type="ECO:0000269" key="2">
    <source>
    </source>
</evidence>
<evidence type="ECO:0000269" key="3">
    <source>
    </source>
</evidence>
<evidence type="ECO:0000269" key="4">
    <source>
    </source>
</evidence>
<evidence type="ECO:0000269" key="5">
    <source>
    </source>
</evidence>
<evidence type="ECO:0000269" key="6">
    <source>
    </source>
</evidence>
<evidence type="ECO:0000269" key="7">
    <source>
    </source>
</evidence>
<evidence type="ECO:0000269" key="8">
    <source>
    </source>
</evidence>
<evidence type="ECO:0000269" key="9">
    <source>
    </source>
</evidence>
<evidence type="ECO:0000269" key="10">
    <source>
    </source>
</evidence>
<evidence type="ECO:0000269" key="11">
    <source>
    </source>
</evidence>
<evidence type="ECO:0000269" key="12">
    <source>
    </source>
</evidence>
<evidence type="ECO:0000269" key="13">
    <source>
    </source>
</evidence>
<evidence type="ECO:0000269" key="14">
    <source>
    </source>
</evidence>
<evidence type="ECO:0000269" key="15">
    <source>
    </source>
</evidence>
<evidence type="ECO:0000269" key="16">
    <source>
    </source>
</evidence>
<evidence type="ECO:0000269" key="17">
    <source>
    </source>
</evidence>
<evidence type="ECO:0000269" key="18">
    <source>
    </source>
</evidence>
<evidence type="ECO:0000269" key="19">
    <source>
    </source>
</evidence>
<evidence type="ECO:0000269" key="20">
    <source>
    </source>
</evidence>
<evidence type="ECO:0000305" key="21"/>
<evidence type="ECO:0007829" key="22">
    <source>
        <dbReference type="PDB" id="9B31"/>
    </source>
</evidence>
<evidence type="ECO:0007829" key="23">
    <source>
        <dbReference type="PDB" id="9B3I"/>
    </source>
</evidence>
<keyword id="KW-0002">3D-structure</keyword>
<keyword id="KW-0007">Acetylation</keyword>
<keyword id="KW-0158">Chromosome</keyword>
<keyword id="KW-0903">Direct protein sequencing</keyword>
<keyword id="KW-0238">DNA-binding</keyword>
<keyword id="KW-1017">Isopeptide bond</keyword>
<keyword id="KW-0488">Methylation</keyword>
<keyword id="KW-0544">Nucleosome core</keyword>
<keyword id="KW-0539">Nucleus</keyword>
<keyword id="KW-0597">Phosphoprotein</keyword>
<keyword id="KW-1185">Reference proteome</keyword>
<keyword id="KW-0832">Ubl conjugation</keyword>
<accession>P02294</accession>
<accession>D6VQ00</accession>
<feature type="initiator methionine" description="Removed" evidence="21">
    <location>
        <position position="1"/>
    </location>
</feature>
<feature type="chain" id="PRO_0000071939" description="Histone H2B.2">
    <location>
        <begin position="2"/>
        <end position="131"/>
    </location>
</feature>
<feature type="region of interest" description="Disordered" evidence="1">
    <location>
        <begin position="1"/>
        <end position="37"/>
    </location>
</feature>
<feature type="compositionally biased region" description="Basic and acidic residues" evidence="1">
    <location>
        <begin position="1"/>
        <end position="19"/>
    </location>
</feature>
<feature type="modified residue" description="N6-acetyllysine; alternate" evidence="17">
    <location>
        <position position="7"/>
    </location>
</feature>
<feature type="modified residue" description="N6-acetyllysine; alternate" evidence="17">
    <location>
        <position position="8"/>
    </location>
</feature>
<feature type="modified residue" description="Phosphoserine" evidence="15 16">
    <location>
        <position position="11"/>
    </location>
</feature>
<feature type="modified residue" description="N6-acetyllysine" evidence="3 12">
    <location>
        <position position="12"/>
    </location>
</feature>
<feature type="modified residue" description="N6-acetyllysine; alternate" evidence="3 12 17 19">
    <location>
        <position position="17"/>
    </location>
</feature>
<feature type="modified residue" description="N6-acetyllysine; alternate" evidence="19">
    <location>
        <position position="18"/>
    </location>
</feature>
<feature type="modified residue" description="N6-acetyllysine; alternate" evidence="19">
    <location>
        <position position="22"/>
    </location>
</feature>
<feature type="modified residue" description="N6-butyryllysine; alternate" evidence="19">
    <location>
        <position position="22"/>
    </location>
</feature>
<feature type="modified residue" description="N6-acetyllysine; alternate" evidence="19">
    <location>
        <position position="23"/>
    </location>
</feature>
<feature type="modified residue" description="N6-methyllysine; alternate" evidence="19">
    <location>
        <position position="23"/>
    </location>
</feature>
<feature type="modified residue" description="N6-succinyllysine" evidence="20">
    <location>
        <position position="35"/>
    </location>
</feature>
<feature type="modified residue" description="N6,N6-dimethyllysine" evidence="19">
    <location>
        <position position="38"/>
    </location>
</feature>
<feature type="modified residue" description="N6-succinyllysine" evidence="20">
    <location>
        <position position="47"/>
    </location>
</feature>
<feature type="cross-link" description="Glycyl lysine isopeptide (Lys-Gly) (interchain with G-Cter in SUMO); alternate">
    <location>
        <position position="7"/>
    </location>
</feature>
<feature type="cross-link" description="Glycyl lysine isopeptide (Lys-Gly) (interchain with G-Cter in SUMO); alternate">
    <location>
        <position position="8"/>
    </location>
</feature>
<feature type="cross-link" description="Glycyl lysine isopeptide (Lys-Gly) (interchain with G-Cter in SUMO); alternate" evidence="21">
    <location>
        <position position="17"/>
    </location>
</feature>
<feature type="cross-link" description="Glycyl lysine isopeptide (Lys-Gly) (interchain with G-Cter in SUMO); alternate" evidence="21">
    <location>
        <position position="18"/>
    </location>
</feature>
<feature type="cross-link" description="Glycyl lysine isopeptide (Lys-Gly) (interchain with G-Cter in ubiquitin)" evidence="6 7 9 13">
    <location>
        <position position="124"/>
    </location>
</feature>
<feature type="mutagenesis site" description="Reduces sumoylation." evidence="17">
    <original>KK</original>
    <variation>AA</variation>
    <location>
        <begin position="7"/>
        <end position="8"/>
    </location>
</feature>
<feature type="mutagenesis site" description="Desensitizes cells to H(2)O(2) treatment." evidence="15">
    <original>S</original>
    <variation>A</variation>
    <location>
        <position position="11"/>
    </location>
</feature>
<feature type="mutagenesis site" description="Induces apoptotic-like features including chromatin condensation." evidence="15">
    <original>S</original>
    <variation>E</variation>
    <location>
        <position position="11"/>
    </location>
</feature>
<feature type="mutagenesis site" description="Reduces sumoylation." evidence="17">
    <original>KK</original>
    <variation>AA</variation>
    <location>
        <begin position="17"/>
        <end position="18"/>
    </location>
</feature>
<feature type="mutagenesis site" description="Impairs ubiquitin conjugation, DNA double-strand breaks formation during meiosis and histone H3-K79 methylation." evidence="5 9 13">
    <original>K</original>
    <variation>R</variation>
    <location>
        <position position="124"/>
    </location>
</feature>
<feature type="helix" evidence="23">
    <location>
        <begin position="42"/>
        <end position="52"/>
    </location>
</feature>
<feature type="strand" evidence="22">
    <location>
        <begin position="53"/>
        <end position="55"/>
    </location>
</feature>
<feature type="helix" evidence="23">
    <location>
        <begin position="60"/>
        <end position="87"/>
    </location>
</feature>
<feature type="strand" evidence="23">
    <location>
        <begin position="92"/>
        <end position="94"/>
    </location>
</feature>
<feature type="helix" evidence="23">
    <location>
        <begin position="95"/>
        <end position="105"/>
    </location>
</feature>
<feature type="helix" evidence="23">
    <location>
        <begin position="108"/>
        <end position="126"/>
    </location>
</feature>
<sequence length="131" mass="14237">MSSAAEKKPASKAPAEKKPAAKKTSTSVDGKKRSKVRKETYSSYIYKVLKQTHPDTGISQKSMSILNSFVNDIFERIATEASKLAAYNKKSTISAREIQTAVRLILPGELAKHAVSEGTRAVTKYSSSTQA</sequence>
<dbReference type="EMBL" id="V01308">
    <property type="protein sequence ID" value="CAA24615.1"/>
    <property type="molecule type" value="Genomic_DNA"/>
</dbReference>
<dbReference type="EMBL" id="Z26494">
    <property type="protein sequence ID" value="CAA81268.1"/>
    <property type="molecule type" value="Genomic_DNA"/>
</dbReference>
<dbReference type="EMBL" id="Z35763">
    <property type="protein sequence ID" value="CAA84817.1"/>
    <property type="molecule type" value="Genomic_DNA"/>
</dbReference>
<dbReference type="EMBL" id="AY693063">
    <property type="protein sequence ID" value="AAT93082.1"/>
    <property type="molecule type" value="Genomic_DNA"/>
</dbReference>
<dbReference type="EMBL" id="BK006936">
    <property type="protein sequence ID" value="DAA07120.1"/>
    <property type="molecule type" value="Genomic_DNA"/>
</dbReference>
<dbReference type="PIR" id="S44558">
    <property type="entry name" value="HSBYB2"/>
</dbReference>
<dbReference type="RefSeq" id="NP_009553.1">
    <property type="nucleotide sequence ID" value="NM_001178242.1"/>
</dbReference>
<dbReference type="PDB" id="1ID3">
    <property type="method" value="X-ray"/>
    <property type="resolution" value="3.10 A"/>
    <property type="chains" value="D/H=2-131"/>
</dbReference>
<dbReference type="PDB" id="4JJN">
    <property type="method" value="X-ray"/>
    <property type="resolution" value="3.09 A"/>
    <property type="chains" value="D/H=2-131"/>
</dbReference>
<dbReference type="PDB" id="6QLD">
    <property type="method" value="EM"/>
    <property type="resolution" value="4.15 A"/>
    <property type="chains" value="d=37-129"/>
</dbReference>
<dbReference type="PDB" id="7E9C">
    <property type="method" value="EM"/>
    <property type="resolution" value="3.50 A"/>
    <property type="chains" value="D/H=1-131"/>
</dbReference>
<dbReference type="PDB" id="7E9F">
    <property type="method" value="EM"/>
    <property type="resolution" value="4.00 A"/>
    <property type="chains" value="D/H=1-131"/>
</dbReference>
<dbReference type="PDB" id="8F0X">
    <property type="method" value="EM"/>
    <property type="resolution" value="3.21 A"/>
    <property type="chains" value="C=2-131"/>
</dbReference>
<dbReference type="PDB" id="8F1E">
    <property type="method" value="EM"/>
    <property type="resolution" value="3.28 A"/>
    <property type="chains" value="C=2-131"/>
</dbReference>
<dbReference type="PDB" id="8XGC">
    <property type="method" value="EM"/>
    <property type="resolution" value="3.70 A"/>
    <property type="chains" value="Q=1-131"/>
</dbReference>
<dbReference type="PDB" id="9B31">
    <property type="method" value="EM"/>
    <property type="resolution" value="3.20 A"/>
    <property type="chains" value="C=2-131"/>
</dbReference>
<dbReference type="PDB" id="9B3F">
    <property type="method" value="EM"/>
    <property type="resolution" value="3.54 A"/>
    <property type="chains" value="C=2-131"/>
</dbReference>
<dbReference type="PDB" id="9B3I">
    <property type="method" value="EM"/>
    <property type="resolution" value="2.88 A"/>
    <property type="chains" value="C=2-131"/>
</dbReference>
<dbReference type="PDBsum" id="1ID3"/>
<dbReference type="PDBsum" id="4JJN"/>
<dbReference type="PDBsum" id="6QLD"/>
<dbReference type="PDBsum" id="7E9C"/>
<dbReference type="PDBsum" id="7E9F"/>
<dbReference type="PDBsum" id="8F0X"/>
<dbReference type="PDBsum" id="8F1E"/>
<dbReference type="PDBsum" id="8XGC"/>
<dbReference type="PDBsum" id="9B31"/>
<dbReference type="PDBsum" id="9B3F"/>
<dbReference type="PDBsum" id="9B3I"/>
<dbReference type="EMDB" id="EMD-28782"/>
<dbReference type="EMDB" id="EMD-28796"/>
<dbReference type="EMDB" id="EMD-31029"/>
<dbReference type="EMDB" id="EMD-31030"/>
<dbReference type="EMDB" id="EMD-38317"/>
<dbReference type="EMDB" id="EMD-4579"/>
<dbReference type="SMR" id="P02294"/>
<dbReference type="BioGRID" id="32700">
    <property type="interactions" value="383"/>
</dbReference>
<dbReference type="ComplexPortal" id="CPX-1610">
    <property type="entry name" value="Nucleosome, variant HTA2-HTB2"/>
</dbReference>
<dbReference type="ComplexPortal" id="CPX-1614">
    <property type="entry name" value="Nucleosome, variant HTZ1-HTB2"/>
</dbReference>
<dbReference type="ComplexPortal" id="CPX-2566">
    <property type="entry name" value="Nucleosome, variant HTA1-HTB2"/>
</dbReference>
<dbReference type="DIP" id="DIP-3897N"/>
<dbReference type="FunCoup" id="P02294">
    <property type="interactions" value="1377"/>
</dbReference>
<dbReference type="IntAct" id="P02294">
    <property type="interactions" value="185"/>
</dbReference>
<dbReference type="MINT" id="P02294"/>
<dbReference type="STRING" id="4932.YBL002W"/>
<dbReference type="iPTMnet" id="P02294"/>
<dbReference type="PaxDb" id="4932-YBL002W"/>
<dbReference type="PeptideAtlas" id="P02294"/>
<dbReference type="EnsemblFungi" id="YBL002W_mRNA">
    <property type="protein sequence ID" value="YBL002W"/>
    <property type="gene ID" value="YBL002W"/>
</dbReference>
<dbReference type="GeneID" id="852284"/>
<dbReference type="KEGG" id="sce:YBL002W"/>
<dbReference type="AGR" id="SGD:S000000098"/>
<dbReference type="SGD" id="S000000098">
    <property type="gene designation" value="HTB2"/>
</dbReference>
<dbReference type="VEuPathDB" id="FungiDB:YBL002W"/>
<dbReference type="eggNOG" id="KOG1744">
    <property type="taxonomic scope" value="Eukaryota"/>
</dbReference>
<dbReference type="GeneTree" id="ENSGT01130000278348"/>
<dbReference type="HOGENOM" id="CLU_075666_1_3_1"/>
<dbReference type="InParanoid" id="P02294"/>
<dbReference type="OMA" id="AQLCQTT"/>
<dbReference type="OrthoDB" id="10254238at2759"/>
<dbReference type="BioCyc" id="YEAST:G3O-28908-MONOMER"/>
<dbReference type="Reactome" id="R-SCE-2299718">
    <property type="pathway name" value="Condensation of Prophase Chromosomes"/>
</dbReference>
<dbReference type="Reactome" id="R-SCE-2559580">
    <property type="pathway name" value="Oxidative Stress Induced Senescence"/>
</dbReference>
<dbReference type="Reactome" id="R-SCE-3214815">
    <property type="pathway name" value="HDACs deacetylate histones"/>
</dbReference>
<dbReference type="Reactome" id="R-SCE-3214847">
    <property type="pathway name" value="HATs acetylate histones"/>
</dbReference>
<dbReference type="Reactome" id="R-SCE-427359">
    <property type="pathway name" value="SIRT1 negatively regulates rRNA expression"/>
</dbReference>
<dbReference type="Reactome" id="R-SCE-5625886">
    <property type="pathway name" value="Activated PKN1 stimulates transcription of AR (androgen receptor) regulated genes KLK2 and KLK3"/>
</dbReference>
<dbReference type="Reactome" id="R-SCE-5689880">
    <property type="pathway name" value="Ub-specific processing proteases"/>
</dbReference>
<dbReference type="Reactome" id="R-SCE-5693565">
    <property type="pathway name" value="Recruitment and ATM-mediated phosphorylation of repair and signaling proteins at DNA double strand breaks"/>
</dbReference>
<dbReference type="Reactome" id="R-SCE-68616">
    <property type="pathway name" value="Assembly of the ORC complex at the origin of replication"/>
</dbReference>
<dbReference type="Reactome" id="R-SCE-73772">
    <property type="pathway name" value="RNA Polymerase I Promoter Escape"/>
</dbReference>
<dbReference type="Reactome" id="R-SCE-9018519">
    <property type="pathway name" value="Estrogen-dependent gene expression"/>
</dbReference>
<dbReference type="BioGRID-ORCS" id="852284">
    <property type="hits" value="2 hits in 10 CRISPR screens"/>
</dbReference>
<dbReference type="EvolutionaryTrace" id="P02294"/>
<dbReference type="PRO" id="PR:P02294"/>
<dbReference type="Proteomes" id="UP000002311">
    <property type="component" value="Chromosome II"/>
</dbReference>
<dbReference type="RNAct" id="P02294">
    <property type="molecule type" value="protein"/>
</dbReference>
<dbReference type="GO" id="GO:0000786">
    <property type="term" value="C:nucleosome"/>
    <property type="evidence" value="ECO:0000353"/>
    <property type="project" value="ComplexPortal"/>
</dbReference>
<dbReference type="GO" id="GO:0005634">
    <property type="term" value="C:nucleus"/>
    <property type="evidence" value="ECO:0000303"/>
    <property type="project" value="ComplexPortal"/>
</dbReference>
<dbReference type="GO" id="GO:0003677">
    <property type="term" value="F:DNA binding"/>
    <property type="evidence" value="ECO:0000318"/>
    <property type="project" value="GO_Central"/>
</dbReference>
<dbReference type="GO" id="GO:0046982">
    <property type="term" value="F:protein heterodimerization activity"/>
    <property type="evidence" value="ECO:0007669"/>
    <property type="project" value="InterPro"/>
</dbReference>
<dbReference type="GO" id="GO:0030527">
    <property type="term" value="F:structural constituent of chromatin"/>
    <property type="evidence" value="ECO:0007669"/>
    <property type="project" value="InterPro"/>
</dbReference>
<dbReference type="GO" id="GO:0006325">
    <property type="term" value="P:chromatin organization"/>
    <property type="evidence" value="ECO:0000304"/>
    <property type="project" value="SGD"/>
</dbReference>
<dbReference type="GO" id="GO:0006355">
    <property type="term" value="P:regulation of DNA-templated transcription"/>
    <property type="evidence" value="ECO:0000303"/>
    <property type="project" value="ComplexPortal"/>
</dbReference>
<dbReference type="CDD" id="cd22910">
    <property type="entry name" value="HFD_H2B"/>
    <property type="match status" value="1"/>
</dbReference>
<dbReference type="FunFam" id="1.10.20.10:FF:000014">
    <property type="entry name" value="Histone H2B"/>
    <property type="match status" value="1"/>
</dbReference>
<dbReference type="Gene3D" id="1.10.20.10">
    <property type="entry name" value="Histone, subunit A"/>
    <property type="match status" value="1"/>
</dbReference>
<dbReference type="IDEAL" id="IID50136"/>
<dbReference type="InterPro" id="IPR009072">
    <property type="entry name" value="Histone-fold"/>
</dbReference>
<dbReference type="InterPro" id="IPR007125">
    <property type="entry name" value="Histone_H2A/H2B/H3"/>
</dbReference>
<dbReference type="InterPro" id="IPR000558">
    <property type="entry name" value="Histone_H2B"/>
</dbReference>
<dbReference type="InterPro" id="IPR055333">
    <property type="entry name" value="HISTONE_H2B_site"/>
</dbReference>
<dbReference type="PANTHER" id="PTHR23428">
    <property type="entry name" value="HISTONE H2B"/>
    <property type="match status" value="1"/>
</dbReference>
<dbReference type="Pfam" id="PF00125">
    <property type="entry name" value="Histone"/>
    <property type="match status" value="1"/>
</dbReference>
<dbReference type="PRINTS" id="PR00621">
    <property type="entry name" value="HISTONEH2B"/>
</dbReference>
<dbReference type="SMART" id="SM00427">
    <property type="entry name" value="H2B"/>
    <property type="match status" value="1"/>
</dbReference>
<dbReference type="SUPFAM" id="SSF47113">
    <property type="entry name" value="Histone-fold"/>
    <property type="match status" value="1"/>
</dbReference>
<dbReference type="PROSITE" id="PS00357">
    <property type="entry name" value="HISTONE_H2B"/>
    <property type="match status" value="1"/>
</dbReference>
<comment type="function">
    <text evidence="5 10 13 14 15 16 17">Core component of nucleosome. Nucleosomes wrap and compact DNA into chromatin, limiting DNA accessibility to the cellular machineries which require DNA as a template. Histones thereby play a central role in transcription regulation, DNA repair, DNA replication and chromosomal stability. DNA accessibility is regulated via a complex set of post-translational modifications of histones, also called histone code, and nucleosome remodeling.</text>
</comment>
<comment type="subunit">
    <text evidence="4 18">The nucleosome is a histone octamer containing two molecules each of H2A, H2B, H3 and H4 assembled in one H3-H4 heterotetramer and two H2A-H2B heterodimers. The octamer wraps approximately 147 bp of DNA. Interacts with NAP1.</text>
</comment>
<comment type="subcellular location">
    <subcellularLocation>
        <location>Nucleus</location>
    </subcellularLocation>
    <subcellularLocation>
        <location>Chromosome</location>
    </subcellularLocation>
</comment>
<comment type="PTM">
    <text>Monoubiquitinated by the RAD6/UBC2-BRE1 complex to form H2BK123ub1. H2BK123ub1 gives a specific tag for epigenetic transcriptional activation and is also prerequisite for H3K4me and H3K79me formation. H2BK123ub1 also modulates the formation of double-strand breaks during meiosis and is a prerequisite for DNA-damage checkpoint activation. Deubiquitination is performed by UBP8 in presence of SGF11.</text>
</comment>
<comment type="PTM">
    <text evidence="15 16">Phosphorylated by STE20 to form H2BS10ph during progression through meiotic prophase. May be correlated with chromosome condensation. H2BS10ph is also formed after H(2)O(2) treatment, and is a step leading to apoptosis.</text>
</comment>
<comment type="PTM">
    <text evidence="2 3 12 17">Acetylated by GCN5, a component of the SAGA complex, to form H2BK11ac and H2BK16ac. H2BK16ac can also be formed by ESA1, a component of the NuA4 histone acetyltransferase (HAT) complex. Acetylation of N-terminal lysines and particularly formation of H2BK11acK16ac has a positive effect on transcription.</text>
</comment>
<comment type="PTM">
    <text evidence="11 17">Sumoylation to form H2BK6su or H2BK7su, and probably also H2BK16su or H2BK17su, occurs preferentially near the telomeres and represses gene transcription.</text>
</comment>
<comment type="miscellaneous">
    <text evidence="8">Present with 443000 molecules/cell in log phase SD medium.</text>
</comment>
<comment type="similarity">
    <text evidence="21">Belongs to the histone H2B family.</text>
</comment>
<comment type="caution">
    <text evidence="21">To ensure consistency between histone entries, we follow the 'Brno' nomenclature for histone modifications, with positions referring to those used in the literature for the 'closest' model organism. Due to slight variations in histone sequences between organisms and to the presence of initiator methionine in UniProtKB/Swiss-Prot sequences, the actual positions of modified amino acids in the sequence generally differ. In this entry the following conventions are used: H2BK6ac = acetylated Lys-7; H2BK6su = sumoylated Lys-7; H2BK7ac = acetylated Lys-8; H2BK7su = sumoylated Lys-8; H2BS10ph = phosphorylated Ser-11; H2BK11ac = acetylated Lys-12; H2BK16ac = acetylated Lys-17; H2BK16su = sumoylated Lys-17; H2BK17su = sumoylated Lys-18; H2BK123ub1 = monoubiquitinated Lys-124.</text>
</comment>
<organism>
    <name type="scientific">Saccharomyces cerevisiae (strain ATCC 204508 / S288c)</name>
    <name type="common">Baker's yeast</name>
    <dbReference type="NCBI Taxonomy" id="559292"/>
    <lineage>
        <taxon>Eukaryota</taxon>
        <taxon>Fungi</taxon>
        <taxon>Dikarya</taxon>
        <taxon>Ascomycota</taxon>
        <taxon>Saccharomycotina</taxon>
        <taxon>Saccharomycetes</taxon>
        <taxon>Saccharomycetales</taxon>
        <taxon>Saccharomycetaceae</taxon>
        <taxon>Saccharomyces</taxon>
    </lineage>
</organism>
<reference key="1">
    <citation type="journal article" date="1980" name="Cell">
        <title>Histone H2B genes of yeast encode two different proteins.</title>
        <authorList>
            <person name="Wallis J.W."/>
            <person name="Hereford L."/>
            <person name="Grunstein M."/>
        </authorList>
    </citation>
    <scope>NUCLEOTIDE SEQUENCE [GENOMIC DNA]</scope>
</reference>
<reference key="2">
    <citation type="journal article" date="1994" name="Yeast">
        <title>Sequence around the centromere of Saccharomyces cerevisiae chromosome II: similarity of CEN2 to CEN4.</title>
        <authorList>
            <person name="Wolfe K.H."/>
            <person name="Lohan A.J.E."/>
        </authorList>
    </citation>
    <scope>NUCLEOTIDE SEQUENCE [GENOMIC DNA]</scope>
    <source>
        <strain>ATCC 204508 / S288c</strain>
    </source>
</reference>
<reference key="3">
    <citation type="journal article" date="1994" name="EMBO J.">
        <title>Complete DNA sequence of yeast chromosome II.</title>
        <authorList>
            <person name="Feldmann H."/>
            <person name="Aigle M."/>
            <person name="Aljinovic G."/>
            <person name="Andre B."/>
            <person name="Baclet M.C."/>
            <person name="Barthe C."/>
            <person name="Baur A."/>
            <person name="Becam A.-M."/>
            <person name="Biteau N."/>
            <person name="Boles E."/>
            <person name="Brandt T."/>
            <person name="Brendel M."/>
            <person name="Brueckner M."/>
            <person name="Bussereau F."/>
            <person name="Christiansen C."/>
            <person name="Contreras R."/>
            <person name="Crouzet M."/>
            <person name="Cziepluch C."/>
            <person name="Demolis N."/>
            <person name="Delaveau T."/>
            <person name="Doignon F."/>
            <person name="Domdey H."/>
            <person name="Duesterhus S."/>
            <person name="Dubois E."/>
            <person name="Dujon B."/>
            <person name="El Bakkoury M."/>
            <person name="Entian K.-D."/>
            <person name="Feuermann M."/>
            <person name="Fiers W."/>
            <person name="Fobo G.M."/>
            <person name="Fritz C."/>
            <person name="Gassenhuber J."/>
            <person name="Glansdorff N."/>
            <person name="Goffeau A."/>
            <person name="Grivell L.A."/>
            <person name="de Haan M."/>
            <person name="Hein C."/>
            <person name="Herbert C.J."/>
            <person name="Hollenberg C.P."/>
            <person name="Holmstroem K."/>
            <person name="Jacq C."/>
            <person name="Jacquet M."/>
            <person name="Jauniaux J.-C."/>
            <person name="Jonniaux J.-L."/>
            <person name="Kallesoee T."/>
            <person name="Kiesau P."/>
            <person name="Kirchrath L."/>
            <person name="Koetter P."/>
            <person name="Korol S."/>
            <person name="Liebl S."/>
            <person name="Logghe M."/>
            <person name="Lohan A.J.E."/>
            <person name="Louis E.J."/>
            <person name="Li Z.Y."/>
            <person name="Maat M.J."/>
            <person name="Mallet L."/>
            <person name="Mannhaupt G."/>
            <person name="Messenguy F."/>
            <person name="Miosga T."/>
            <person name="Molemans F."/>
            <person name="Mueller S."/>
            <person name="Nasr F."/>
            <person name="Obermaier B."/>
            <person name="Perea J."/>
            <person name="Pierard A."/>
            <person name="Piravandi E."/>
            <person name="Pohl F.M."/>
            <person name="Pohl T.M."/>
            <person name="Potier S."/>
            <person name="Proft M."/>
            <person name="Purnelle B."/>
            <person name="Ramezani Rad M."/>
            <person name="Rieger M."/>
            <person name="Rose M."/>
            <person name="Schaaff-Gerstenschlaeger I."/>
            <person name="Scherens B."/>
            <person name="Schwarzlose C."/>
            <person name="Skala J."/>
            <person name="Slonimski P.P."/>
            <person name="Smits P.H.M."/>
            <person name="Souciet J.-L."/>
            <person name="Steensma H.Y."/>
            <person name="Stucka R."/>
            <person name="Urrestarazu L.A."/>
            <person name="van der Aart Q.J.M."/>
            <person name="Van Dyck L."/>
            <person name="Vassarotti A."/>
            <person name="Vetter I."/>
            <person name="Vierendeels F."/>
            <person name="Vissers S."/>
            <person name="Wagner G."/>
            <person name="de Wergifosse P."/>
            <person name="Wolfe K.H."/>
            <person name="Zagulski M."/>
            <person name="Zimmermann F.K."/>
            <person name="Mewes H.-W."/>
            <person name="Kleine K."/>
        </authorList>
    </citation>
    <scope>NUCLEOTIDE SEQUENCE [LARGE SCALE GENOMIC DNA]</scope>
    <source>
        <strain>ATCC 204508 / S288c</strain>
    </source>
</reference>
<reference key="4">
    <citation type="journal article" date="2014" name="G3 (Bethesda)">
        <title>The reference genome sequence of Saccharomyces cerevisiae: Then and now.</title>
        <authorList>
            <person name="Engel S.R."/>
            <person name="Dietrich F.S."/>
            <person name="Fisk D.G."/>
            <person name="Binkley G."/>
            <person name="Balakrishnan R."/>
            <person name="Costanzo M.C."/>
            <person name="Dwight S.S."/>
            <person name="Hitz B.C."/>
            <person name="Karra K."/>
            <person name="Nash R.S."/>
            <person name="Weng S."/>
            <person name="Wong E.D."/>
            <person name="Lloyd P."/>
            <person name="Skrzypek M.S."/>
            <person name="Miyasato S.R."/>
            <person name="Simison M."/>
            <person name="Cherry J.M."/>
        </authorList>
    </citation>
    <scope>GENOME REANNOTATION</scope>
    <source>
        <strain>ATCC 204508 / S288c</strain>
    </source>
</reference>
<reference key="5">
    <citation type="journal article" date="2007" name="Genome Res.">
        <title>Approaching a complete repository of sequence-verified protein-encoding clones for Saccharomyces cerevisiae.</title>
        <authorList>
            <person name="Hu Y."/>
            <person name="Rolfs A."/>
            <person name="Bhullar B."/>
            <person name="Murthy T.V.S."/>
            <person name="Zhu C."/>
            <person name="Berger M.F."/>
            <person name="Camargo A.A."/>
            <person name="Kelley F."/>
            <person name="McCarron S."/>
            <person name="Jepson D."/>
            <person name="Richardson A."/>
            <person name="Raphael J."/>
            <person name="Moreira D."/>
            <person name="Taycher E."/>
            <person name="Zuo D."/>
            <person name="Mohr S."/>
            <person name="Kane M.F."/>
            <person name="Williamson J."/>
            <person name="Simpson A.J.G."/>
            <person name="Bulyk M.L."/>
            <person name="Harlow E."/>
            <person name="Marsischky G."/>
            <person name="Kolodner R.D."/>
            <person name="LaBaer J."/>
        </authorList>
    </citation>
    <scope>NUCLEOTIDE SEQUENCE [GENOMIC DNA]</scope>
    <source>
        <strain>ATCC 204508 / S288c</strain>
    </source>
</reference>
<reference key="6">
    <citation type="journal article" date="1980" name="Eur. J. Biochem.">
        <title>The histones of yeast. The isolation and partial structure of the core histones.</title>
        <authorList>
            <person name="Brandt W.F."/>
            <person name="Patterson K."/>
            <person name="von Holt C."/>
        </authorList>
    </citation>
    <scope>PROTEIN SEQUENCE OF 64-89</scope>
    <scope>PROBABLE CLEAVAGE OF INITIATOR METHIONINE</scope>
</reference>
<reference key="7">
    <citation type="journal article" date="2000" name="J. Biol. Chem.">
        <title>Steady-state levels of histone acetylation in Saccharomyces cerevisiae.</title>
        <authorList>
            <person name="Waterborg J.H."/>
        </authorList>
    </citation>
    <scope>ACETYLATION</scope>
</reference>
<reference key="8">
    <citation type="journal article" date="2001" name="Mol. Cell">
        <title>Highly specific antibodies determine histone acetylation site usage in yeast heterochromatin and euchromatin.</title>
        <authorList>
            <person name="Suka N."/>
            <person name="Suka Y."/>
            <person name="Carmen A.A."/>
            <person name="Wu J."/>
            <person name="Grunstein M."/>
        </authorList>
    </citation>
    <scope>ACETYLATION AT LYS-12 AND LYS-17</scope>
</reference>
<reference key="9">
    <citation type="journal article" date="2002" name="Nature">
        <title>Gene silencing: trans-histone regulatory pathway in chromatin.</title>
        <authorList>
            <person name="Briggs S.D."/>
            <person name="Xiao T."/>
            <person name="Sun Z.-W."/>
            <person name="Caldwell J.A."/>
            <person name="Shabanowitz J."/>
            <person name="Hunt D.F."/>
            <person name="Allis C.D."/>
            <person name="Strahl B.D."/>
        </authorList>
    </citation>
    <scope>FUNCTION</scope>
    <scope>MUTAGENESIS OF LYS-124</scope>
</reference>
<reference key="10">
    <citation type="journal article" date="2003" name="Genes Dev.">
        <title>Transcriptional activation via sequential histone H2B ubiquitylation and deubiquitylation, mediated by SAGA-associated Ubp8.</title>
        <authorList>
            <person name="Henry K.W."/>
            <person name="Wyce A."/>
            <person name="Lo W.-S."/>
            <person name="Duggan L.J."/>
            <person name="Emre N.C.T."/>
            <person name="Kao C.-F."/>
            <person name="Pillus L."/>
            <person name="Shilatifard A."/>
            <person name="Osley M.A."/>
            <person name="Berger S.L."/>
        </authorList>
    </citation>
    <scope>UBIQUITINATION</scope>
    <scope>DEUBIQUITINATION BY UBP8</scope>
</reference>
<reference key="11">
    <citation type="journal article" date="2003" name="Mol. Cell">
        <title>A conserved RING finger protein required for histone H2B monoubiquitination and cell size control.</title>
        <authorList>
            <person name="Hwang W.W."/>
            <person name="Venkatasubrahmanyam S."/>
            <person name="Ianculescu A.G."/>
            <person name="Tong A."/>
            <person name="Boone C."/>
            <person name="Madhani H.D."/>
        </authorList>
    </citation>
    <scope>UBIQUITINATION AT LYS-124</scope>
</reference>
<reference key="12">
    <citation type="journal article" date="2003" name="Mol. Cell">
        <title>Bre1, an E3 ubiquitin ligase required for recruitment and substrate selection of Rad6 at a promoter.</title>
        <authorList>
            <person name="Wood A."/>
            <person name="Krogan N.J."/>
            <person name="Dover J."/>
            <person name="Schneider J."/>
            <person name="Heidt J."/>
            <person name="Boateng M.A."/>
            <person name="Dean K."/>
            <person name="Golshani A."/>
            <person name="Zhang Y."/>
            <person name="Greenblatt J.F."/>
            <person name="Johnston M."/>
            <person name="Shilatifard A."/>
        </authorList>
    </citation>
    <scope>UBIQUITINATION AT LYS-124</scope>
</reference>
<reference key="13">
    <citation type="journal article" date="2003" name="Nature">
        <title>Global analysis of protein expression in yeast.</title>
        <authorList>
            <person name="Ghaemmaghami S."/>
            <person name="Huh W.-K."/>
            <person name="Bower K."/>
            <person name="Howson R.W."/>
            <person name="Belle A."/>
            <person name="Dephoure N."/>
            <person name="O'Shea E.K."/>
            <person name="Weissman J.S."/>
        </authorList>
    </citation>
    <scope>LEVEL OF PROTEIN EXPRESSION [LARGE SCALE ANALYSIS]</scope>
</reference>
<reference key="14">
    <citation type="journal article" date="2004" name="Cell">
        <title>Mapping global histone acetylation patterns to gene expression.</title>
        <authorList>
            <person name="Kurdistani S.K."/>
            <person name="Tavazoie S."/>
            <person name="Grunstein M."/>
        </authorList>
    </citation>
    <scope>ACETYLATION AT LYS-12 AND LYS-17</scope>
</reference>
<reference key="15">
    <citation type="journal article" date="2004" name="Genes Dev.">
        <title>Rad6 plays a role in transcriptional activation through ubiquitylation of histone H2B.</title>
        <authorList>
            <person name="Kao C.-F."/>
            <person name="Hillyer C."/>
            <person name="Tsukuda T."/>
            <person name="Henry K.W."/>
            <person name="Berger S.L."/>
            <person name="Osley M.A."/>
        </authorList>
    </citation>
    <scope>UBIQUITINATION BY UBC2</scope>
    <scope>FUNCTION</scope>
</reference>
<reference key="16">
    <citation type="journal article" date="2004" name="J. Biol. Chem.">
        <title>Carbohydrates induce mono-ubiquitination of H2B in yeast.</title>
        <authorList>
            <person name="Dong L."/>
            <person name="Xu C.W."/>
        </authorList>
    </citation>
    <scope>UBIQUITINATION AT LYS-124</scope>
    <scope>MUTAGENESIS OF LYS-124</scope>
</reference>
<reference key="17">
    <citation type="journal article" date="2004" name="J. Biol. Chem.">
        <title>Global analyses of sumoylated proteins in Saccharomyces cerevisiae. Induction of protein sumoylation by cellular stresses.</title>
        <authorList>
            <person name="Zhou W."/>
            <person name="Ryan J.J."/>
            <person name="Zhou H."/>
        </authorList>
    </citation>
    <scope>SUMOYLATION [LARGE SCALE ANALYSIS]</scope>
    <scope>IDENTIFICATION BY MASS SPECTROMETRY</scope>
</reference>
<reference key="18">
    <citation type="journal article" date="2004" name="Proc. Natl. Acad. Sci. U.S.A.">
        <title>Rad6-Bre1-mediated histone H2B ubiquitylation modulates the formation of double-strand breaks during meiosis.</title>
        <authorList>
            <person name="Yamashita K."/>
            <person name="Shinohara M."/>
            <person name="Shinohara A."/>
        </authorList>
    </citation>
    <scope>FUNCTION</scope>
    <scope>UBIQUITINATION AT LYS-124 BY THE UBC2-BRE1 COMPLEX</scope>
    <scope>MUTAGENESIS OF LYS-124</scope>
</reference>
<reference key="19">
    <citation type="journal article" date="2005" name="Cell">
        <title>Sterile 20 kinase phosphorylates histone H2B at serine 10 during hydrogen peroxide-induced apoptosis in S. cerevisiae.</title>
        <authorList>
            <person name="Ahn S.-H."/>
            <person name="Cheung W.L."/>
            <person name="Hsu J.-Y."/>
            <person name="Diaz R.L."/>
            <person name="Smith M.M."/>
            <person name="Allis C.D."/>
        </authorList>
    </citation>
    <scope>PHOSPHORYLATION AT SER-11</scope>
    <scope>MUTAGENESIS OF SER-11</scope>
    <scope>FUNCTION</scope>
</reference>
<reference key="20">
    <citation type="journal article" date="2005" name="Cell Cycle">
        <title>H2B (Ser10) phosphorylation is induced during apoptosis and meiosis in S. cerevisiae.</title>
        <authorList>
            <person name="Ahn S.-H."/>
            <person name="Henderson K.A."/>
            <person name="Keeney S."/>
            <person name="Allis C.D."/>
        </authorList>
    </citation>
    <scope>PHOSPHORYLATION AT SER-11</scope>
    <scope>FUNCTION</scope>
</reference>
<reference key="21">
    <citation type="journal article" date="2005" name="Mol. Cell. Biol.">
        <title>Histone H2B ubiquitylation is associated with elongating RNA polymerase II.</title>
        <authorList>
            <person name="Xiao T."/>
            <person name="Kao C.-F."/>
            <person name="Krogan N.J."/>
            <person name="Sun Z.-W."/>
            <person name="Greenblatt J.F."/>
            <person name="Osley M.A."/>
            <person name="Strahl B.D."/>
        </authorList>
    </citation>
    <scope>UBIQUITINATION BY THE UBC2-BRE1 COMPLEX</scope>
    <scope>FUNCTION</scope>
</reference>
<reference key="22">
    <citation type="journal article" date="2005" name="Mol. Cell. Biol.">
        <title>H2B ubiquitin protease Ubp8 and Sgf11 constitute a discrete functional module within the Saccharomyces cerevisiae SAGA complex.</title>
        <authorList>
            <person name="Ingvarsdottir K."/>
            <person name="Krogan N.J."/>
            <person name="Emre N.C.T."/>
            <person name="Wyce A."/>
            <person name="Thompson N.J."/>
            <person name="Emili A."/>
            <person name="Hughes T.R."/>
            <person name="Greenblatt J.F."/>
            <person name="Berger S.L."/>
        </authorList>
    </citation>
    <scope>DEUBIQUITINATION BY THE UBP8-SGF11 COMPLEX</scope>
</reference>
<reference key="23">
    <citation type="journal article" date="2005" name="Mol. Cell. Biol.">
        <title>The deubiquitylation activity of Ubp8 is dependent upon Sgf11 and its association with the SAGA complex.</title>
        <authorList>
            <person name="Lee K.K."/>
            <person name="Florens L."/>
            <person name="Swanson S.K."/>
            <person name="Washburn M.P."/>
            <person name="Workman J.L."/>
        </authorList>
    </citation>
    <scope>DEUBIQUITINATION BY THE UBP8-SGF11 COMPLEX</scope>
</reference>
<reference key="24">
    <citation type="journal article" date="2006" name="Genes Dev.">
        <title>Histone sumoylation is a negative regulator in Saccharomyces cerevisiae and shows dynamic interplay with positive-acting histone modifications.</title>
        <authorList>
            <person name="Nathan D."/>
            <person name="Ingvarsdottir K."/>
            <person name="Sterner D.E."/>
            <person name="Bylebyl G.R."/>
            <person name="Dokmanovic M."/>
            <person name="Dorsey J.A."/>
            <person name="Whelan K.A."/>
            <person name="Krsmanovic M."/>
            <person name="Lane W.S."/>
            <person name="Meluh P.B."/>
            <person name="Johnson E.S."/>
            <person name="Berger S.L."/>
        </authorList>
    </citation>
    <scope>SUMOYLATION AT LYS-7; LYS-8; LYS-17 AND LYS-18</scope>
    <scope>ACETYLATION AT LYS-7; LYS-8 AND LYS-17</scope>
    <scope>MUTAGENESIS OF 7-LYS-LYS-8 AND 17-LYS-LYS-18</scope>
    <scope>FUNCTION</scope>
    <scope>IDENTIFICATION BY MASS SPECTROMETRY</scope>
</reference>
<reference key="25">
    <citation type="journal article" date="2008" name="Mol. Cell. Biol.">
        <title>Phosphorylation by casein kinase 2 regulates Nap1 localization and function.</title>
        <authorList>
            <person name="Calvert M.E.K."/>
            <person name="Keck K.M."/>
            <person name="Ptak C."/>
            <person name="Shabanowitz J."/>
            <person name="Hunt D.F."/>
            <person name="Pemberton L.F."/>
        </authorList>
    </citation>
    <scope>INTERACTION WITH NAP1</scope>
    <scope>IDENTIFICATION BY MASS SPECTROMETRY</scope>
</reference>
<reference key="26">
    <citation type="journal article" date="2009" name="J. Proteome Res.">
        <title>Identification and verification of lysine propionylation and butyrylation in yeast core histones using PTMap software.</title>
        <authorList>
            <person name="Zhang K."/>
            <person name="Chen Y."/>
            <person name="Zhang Z."/>
            <person name="Zhao Y."/>
        </authorList>
    </citation>
    <scope>ACETYLATION AT LYS-17; LYS-18; LYS-22 AND LYS-23</scope>
    <scope>BUTYRYLATION AT LYS-22</scope>
    <scope>METHYLATION AT LYS-23 AND LYS-38</scope>
</reference>
<reference key="27">
    <citation type="journal article" date="2012" name="Mol. Cell. Proteomics">
        <title>Lysine succinylation and lysine malonylation in histones.</title>
        <authorList>
            <person name="Xie Z."/>
            <person name="Dai J."/>
            <person name="Dai L."/>
            <person name="Tan M."/>
            <person name="Cheng Z."/>
            <person name="Wu Y."/>
            <person name="Boeke J.D."/>
            <person name="Zhao Y."/>
        </authorList>
    </citation>
    <scope>SUCCINYLATION AT LYS-35 AND LYS-47</scope>
</reference>
<reference key="28">
    <citation type="journal article" date="2012" name="Proc. Natl. Acad. Sci. U.S.A.">
        <title>N-terminal acetylome analyses and functional insights of the N-terminal acetyltransferase NatB.</title>
        <authorList>
            <person name="Van Damme P."/>
            <person name="Lasa M."/>
            <person name="Polevoda B."/>
            <person name="Gazquez C."/>
            <person name="Elosegui-Artola A."/>
            <person name="Kim D.S."/>
            <person name="De Juan-Pardo E."/>
            <person name="Demeyer K."/>
            <person name="Hole K."/>
            <person name="Larrea E."/>
            <person name="Timmerman E."/>
            <person name="Prieto J."/>
            <person name="Arnesen T."/>
            <person name="Sherman F."/>
            <person name="Gevaert K."/>
            <person name="Aldabe R."/>
        </authorList>
    </citation>
    <scope>IDENTIFICATION BY MASS SPECTROMETRY [LARGE SCALE ANALYSIS]</scope>
</reference>
<reference key="29">
    <citation type="journal article" date="2001" name="EMBO J.">
        <title>Structure of the yeast nucleosome core particle reveals fundamental changes in internucleosome interactions.</title>
        <authorList>
            <person name="White C.L."/>
            <person name="Suto R.K."/>
            <person name="Luger K."/>
        </authorList>
    </citation>
    <scope>X-RAY CRYSTALLOGRAPHY (3.1 ANGSTROMS) OF NUCLEOSOME CORE COMPLEX</scope>
    <scope>SUBUNIT</scope>
</reference>
<reference key="30">
    <citation type="journal article" date="2006" name="Curr. Biol.">
        <title>The path of DNA in the kinetochore.</title>
        <authorList>
            <person name="Bloom K.S."/>
            <person name="Sharma S."/>
            <person name="Dokholyan N.V."/>
        </authorList>
    </citation>
    <scope>3D-STRUCTURE MODELING</scope>
</reference>